<gene>
    <name evidence="1" type="primary">fabH</name>
    <name type="ordered locus">Bcen2424_1121</name>
</gene>
<keyword id="KW-0012">Acyltransferase</keyword>
<keyword id="KW-0963">Cytoplasm</keyword>
<keyword id="KW-0275">Fatty acid biosynthesis</keyword>
<keyword id="KW-0276">Fatty acid metabolism</keyword>
<keyword id="KW-0444">Lipid biosynthesis</keyword>
<keyword id="KW-0443">Lipid metabolism</keyword>
<keyword id="KW-0511">Multifunctional enzyme</keyword>
<keyword id="KW-0808">Transferase</keyword>
<reference key="1">
    <citation type="submission" date="2006-08" db="EMBL/GenBank/DDBJ databases">
        <title>Complete sequence of chromosome 1 of Burkholderia cenocepacia HI2424.</title>
        <authorList>
            <person name="Copeland A."/>
            <person name="Lucas S."/>
            <person name="Lapidus A."/>
            <person name="Barry K."/>
            <person name="Detter J.C."/>
            <person name="Glavina del Rio T."/>
            <person name="Hammon N."/>
            <person name="Israni S."/>
            <person name="Pitluck S."/>
            <person name="Chain P."/>
            <person name="Malfatti S."/>
            <person name="Shin M."/>
            <person name="Vergez L."/>
            <person name="Schmutz J."/>
            <person name="Larimer F."/>
            <person name="Land M."/>
            <person name="Hauser L."/>
            <person name="Kyrpides N."/>
            <person name="Kim E."/>
            <person name="LiPuma J.J."/>
            <person name="Gonzalez C.F."/>
            <person name="Konstantinidis K."/>
            <person name="Tiedje J.M."/>
            <person name="Richardson P."/>
        </authorList>
    </citation>
    <scope>NUCLEOTIDE SEQUENCE [LARGE SCALE GENOMIC DNA]</scope>
    <source>
        <strain>HI2424</strain>
    </source>
</reference>
<evidence type="ECO:0000255" key="1">
    <source>
        <dbReference type="HAMAP-Rule" id="MF_01815"/>
    </source>
</evidence>
<accession>A0K5U6</accession>
<sequence length="329" mass="34905">MAQSTLYSRVLGTGSYLPPDRVTNQQLTDRLAKEGIETSDEWIVARTGIHARHFAAPDVTTSDLALEASRRAIEAAGVDPQSIDLIIVATSTPDFVFPSTACLLQNKLGIKNGGAAFDVQAVCSGFAYAMATADSFIRSGQHRTALIVGAETFSRILDFKDRTTCVLFGDGAGAVILSASEEPGVLGSALHADGSYSNILCTPGNVNRGVIDGSAFLHMDGQAVFKLAVNVLEKVAIEALAKANLAPEQIDWLIPHQANIRIMTSTCRKLGLPQERMVVTVDQHGNTSAASIPLALDAAVRDGRIQRGQHVLIEGVGGGFTWGASVFRF</sequence>
<protein>
    <recommendedName>
        <fullName evidence="1">Beta-ketoacyl-[acyl-carrier-protein] synthase III</fullName>
        <shortName evidence="1">Beta-ketoacyl-ACP synthase III</shortName>
        <shortName evidence="1">KAS III</shortName>
        <ecNumber evidence="1">2.3.1.180</ecNumber>
    </recommendedName>
    <alternativeName>
        <fullName evidence="1">3-oxoacyl-[acyl-carrier-protein] synthase 3</fullName>
    </alternativeName>
    <alternativeName>
        <fullName evidence="1">3-oxoacyl-[acyl-carrier-protein] synthase III</fullName>
    </alternativeName>
</protein>
<proteinExistence type="inferred from homology"/>
<feature type="chain" id="PRO_1000070216" description="Beta-ketoacyl-[acyl-carrier-protein] synthase III">
    <location>
        <begin position="1"/>
        <end position="329"/>
    </location>
</feature>
<feature type="region of interest" description="ACP-binding" evidence="1">
    <location>
        <begin position="257"/>
        <end position="261"/>
    </location>
</feature>
<feature type="active site" evidence="1">
    <location>
        <position position="123"/>
    </location>
</feature>
<feature type="active site" evidence="1">
    <location>
        <position position="256"/>
    </location>
</feature>
<feature type="active site" evidence="1">
    <location>
        <position position="286"/>
    </location>
</feature>
<name>FABH_BURCH</name>
<organism>
    <name type="scientific">Burkholderia cenocepacia (strain HI2424)</name>
    <dbReference type="NCBI Taxonomy" id="331272"/>
    <lineage>
        <taxon>Bacteria</taxon>
        <taxon>Pseudomonadati</taxon>
        <taxon>Pseudomonadota</taxon>
        <taxon>Betaproteobacteria</taxon>
        <taxon>Burkholderiales</taxon>
        <taxon>Burkholderiaceae</taxon>
        <taxon>Burkholderia</taxon>
        <taxon>Burkholderia cepacia complex</taxon>
    </lineage>
</organism>
<comment type="function">
    <text evidence="1">Catalyzes the condensation reaction of fatty acid synthesis by the addition to an acyl acceptor of two carbons from malonyl-ACP. Catalyzes the first condensation reaction which initiates fatty acid synthesis and may therefore play a role in governing the total rate of fatty acid production. Possesses both acetoacetyl-ACP synthase and acetyl transacylase activities. Its substrate specificity determines the biosynthesis of branched-chain and/or straight-chain of fatty acids.</text>
</comment>
<comment type="catalytic activity">
    <reaction evidence="1">
        <text>malonyl-[ACP] + acetyl-CoA + H(+) = 3-oxobutanoyl-[ACP] + CO2 + CoA</text>
        <dbReference type="Rhea" id="RHEA:12080"/>
        <dbReference type="Rhea" id="RHEA-COMP:9623"/>
        <dbReference type="Rhea" id="RHEA-COMP:9625"/>
        <dbReference type="ChEBI" id="CHEBI:15378"/>
        <dbReference type="ChEBI" id="CHEBI:16526"/>
        <dbReference type="ChEBI" id="CHEBI:57287"/>
        <dbReference type="ChEBI" id="CHEBI:57288"/>
        <dbReference type="ChEBI" id="CHEBI:78449"/>
        <dbReference type="ChEBI" id="CHEBI:78450"/>
        <dbReference type="EC" id="2.3.1.180"/>
    </reaction>
</comment>
<comment type="pathway">
    <text evidence="1">Lipid metabolism; fatty acid biosynthesis.</text>
</comment>
<comment type="subunit">
    <text evidence="1">Homodimer.</text>
</comment>
<comment type="subcellular location">
    <subcellularLocation>
        <location evidence="1">Cytoplasm</location>
    </subcellularLocation>
</comment>
<comment type="domain">
    <text evidence="1">The last Arg residue of the ACP-binding site is essential for the weak association between ACP/AcpP and FabH.</text>
</comment>
<comment type="similarity">
    <text evidence="1">Belongs to the thiolase-like superfamily. FabH family.</text>
</comment>
<dbReference type="EC" id="2.3.1.180" evidence="1"/>
<dbReference type="EMBL" id="CP000458">
    <property type="protein sequence ID" value="ABK07873.1"/>
    <property type="molecule type" value="Genomic_DNA"/>
</dbReference>
<dbReference type="RefSeq" id="WP_006476506.1">
    <property type="nucleotide sequence ID" value="NC_008542.1"/>
</dbReference>
<dbReference type="SMR" id="A0K5U6"/>
<dbReference type="KEGG" id="bch:Bcen2424_1121"/>
<dbReference type="HOGENOM" id="CLU_039592_3_1_4"/>
<dbReference type="UniPathway" id="UPA00094"/>
<dbReference type="GO" id="GO:0005737">
    <property type="term" value="C:cytoplasm"/>
    <property type="evidence" value="ECO:0007669"/>
    <property type="project" value="UniProtKB-SubCell"/>
</dbReference>
<dbReference type="GO" id="GO:0004315">
    <property type="term" value="F:3-oxoacyl-[acyl-carrier-protein] synthase activity"/>
    <property type="evidence" value="ECO:0007669"/>
    <property type="project" value="InterPro"/>
</dbReference>
<dbReference type="GO" id="GO:0033818">
    <property type="term" value="F:beta-ketoacyl-acyl-carrier-protein synthase III activity"/>
    <property type="evidence" value="ECO:0007669"/>
    <property type="project" value="UniProtKB-UniRule"/>
</dbReference>
<dbReference type="GO" id="GO:0006633">
    <property type="term" value="P:fatty acid biosynthetic process"/>
    <property type="evidence" value="ECO:0007669"/>
    <property type="project" value="UniProtKB-UniRule"/>
</dbReference>
<dbReference type="GO" id="GO:0044550">
    <property type="term" value="P:secondary metabolite biosynthetic process"/>
    <property type="evidence" value="ECO:0007669"/>
    <property type="project" value="TreeGrafter"/>
</dbReference>
<dbReference type="CDD" id="cd00830">
    <property type="entry name" value="KAS_III"/>
    <property type="match status" value="1"/>
</dbReference>
<dbReference type="FunFam" id="3.40.47.10:FF:000004">
    <property type="entry name" value="3-oxoacyl-[acyl-carrier-protein] synthase 3"/>
    <property type="match status" value="1"/>
</dbReference>
<dbReference type="Gene3D" id="3.40.47.10">
    <property type="match status" value="2"/>
</dbReference>
<dbReference type="HAMAP" id="MF_01815">
    <property type="entry name" value="FabH"/>
    <property type="match status" value="1"/>
</dbReference>
<dbReference type="InterPro" id="IPR013747">
    <property type="entry name" value="ACP_syn_III_C"/>
</dbReference>
<dbReference type="InterPro" id="IPR013751">
    <property type="entry name" value="ACP_syn_III_N"/>
</dbReference>
<dbReference type="InterPro" id="IPR004655">
    <property type="entry name" value="FabH"/>
</dbReference>
<dbReference type="InterPro" id="IPR016039">
    <property type="entry name" value="Thiolase-like"/>
</dbReference>
<dbReference type="NCBIfam" id="TIGR00747">
    <property type="entry name" value="fabH"/>
    <property type="match status" value="1"/>
</dbReference>
<dbReference type="NCBIfam" id="NF006829">
    <property type="entry name" value="PRK09352.1"/>
    <property type="match status" value="1"/>
</dbReference>
<dbReference type="PANTHER" id="PTHR34069">
    <property type="entry name" value="3-OXOACYL-[ACYL-CARRIER-PROTEIN] SYNTHASE 3"/>
    <property type="match status" value="1"/>
</dbReference>
<dbReference type="PANTHER" id="PTHR34069:SF2">
    <property type="entry name" value="BETA-KETOACYL-[ACYL-CARRIER-PROTEIN] SYNTHASE III"/>
    <property type="match status" value="1"/>
</dbReference>
<dbReference type="Pfam" id="PF08545">
    <property type="entry name" value="ACP_syn_III"/>
    <property type="match status" value="1"/>
</dbReference>
<dbReference type="Pfam" id="PF08541">
    <property type="entry name" value="ACP_syn_III_C"/>
    <property type="match status" value="1"/>
</dbReference>
<dbReference type="SUPFAM" id="SSF53901">
    <property type="entry name" value="Thiolase-like"/>
    <property type="match status" value="1"/>
</dbReference>